<keyword id="KW-1003">Cell membrane</keyword>
<keyword id="KW-0217">Developmental protein</keyword>
<keyword id="KW-1015">Disulfide bond</keyword>
<keyword id="KW-0297">G-protein coupled receptor</keyword>
<keyword id="KW-0325">Glycoprotein</keyword>
<keyword id="KW-0472">Membrane</keyword>
<keyword id="KW-0524">Neurogenesis</keyword>
<keyword id="KW-0675">Receptor</keyword>
<keyword id="KW-1185">Reference proteome</keyword>
<keyword id="KW-0732">Signal</keyword>
<keyword id="KW-0807">Transducer</keyword>
<keyword id="KW-0812">Transmembrane</keyword>
<keyword id="KW-1133">Transmembrane helix</keyword>
<keyword id="KW-0879">Wnt signaling pathway</keyword>
<accession>O42579</accession>
<sequence>MAAYLISFIWVSVILAQKSMGHSLFACEPITLRMCQDLPYNSTFMPNLLNHYDQQTAALAMEPFHPMVNLECSRDLRPFLCALYTPVCMEYGRMTLPCRKLCQRAYNECFKLMEMFGVPWPEEMECSRFPDCDEPYPRIVDISLSGEPSEETPLAVQRDYGFWCPRELKIDPDLRSSFLGVRDCSPPCPHMYFRREELSFARYFIGVISIVCLSATLFTFLTFLIDVTRFRYPERPIIFYAVCYMMVSLIFFIGFLLEDKVACNGANPSQYKASTVTQGSHNKACTMLFMVLYFFTMAGSVWWVILTITWFLAAVPKWGSEAIEKKALLFHASAWGIPGTLTIILLAMNKIEGDNISGVCFVGLYDVHALRYFVLAPLCLDVVVGVSLLLAGIISLNRVRIEIPLEKENQDKLVKFMIRIGVFSILYLVPLLVVIGCYFYEQAYRGVWETTWVQERCREYHIPCPYKVTQTSRPDLILFLMKYLMLLVVGIPSVFWVGSKKTCFEWASFFHGRKKKAGVNESRQVLQEPDFAQSLLRDPNTPIVRKSRGTSTQGTSTHASSTQLAMLDDQRSKAGSVQSKVSSYHGSLHRSRDGRYTPCSYRGIEERLPHGSMSHLTDHSRHSSTHRLNEQSHQGSIRDLSNPLAHISHGTSMNRVIEADATSA</sequence>
<proteinExistence type="evidence at protein level"/>
<dbReference type="EMBL" id="AJ001754">
    <property type="protein sequence ID" value="CAA04977.1"/>
    <property type="molecule type" value="mRNA"/>
</dbReference>
<dbReference type="RefSeq" id="NP_001083918.1">
    <property type="nucleotide sequence ID" value="NM_001090449.1"/>
</dbReference>
<dbReference type="SMR" id="O42579"/>
<dbReference type="MINT" id="O42579"/>
<dbReference type="GlyCosmos" id="O42579">
    <property type="glycosylation" value="2 sites, No reported glycans"/>
</dbReference>
<dbReference type="GeneID" id="399190"/>
<dbReference type="KEGG" id="xla:399190"/>
<dbReference type="AGR" id="Xenbase:XB-GENE-865070"/>
<dbReference type="CTD" id="399190"/>
<dbReference type="Xenbase" id="XB-GENE-865070">
    <property type="gene designation" value="fzd3.L"/>
</dbReference>
<dbReference type="OrthoDB" id="10053709at2759"/>
<dbReference type="Proteomes" id="UP000186698">
    <property type="component" value="Chromosome 5L"/>
</dbReference>
<dbReference type="Bgee" id="399190">
    <property type="expression patterns" value="Expressed in brain and 17 other cell types or tissues"/>
</dbReference>
<dbReference type="GO" id="GO:0016324">
    <property type="term" value="C:apical plasma membrane"/>
    <property type="evidence" value="ECO:0007669"/>
    <property type="project" value="UniProtKB-SubCell"/>
</dbReference>
<dbReference type="GO" id="GO:0009986">
    <property type="term" value="C:cell surface"/>
    <property type="evidence" value="ECO:0007669"/>
    <property type="project" value="UniProtKB-SubCell"/>
</dbReference>
<dbReference type="GO" id="GO:0005886">
    <property type="term" value="C:plasma membrane"/>
    <property type="evidence" value="ECO:0000318"/>
    <property type="project" value="GO_Central"/>
</dbReference>
<dbReference type="GO" id="GO:0004930">
    <property type="term" value="F:G protein-coupled receptor activity"/>
    <property type="evidence" value="ECO:0007669"/>
    <property type="project" value="UniProtKB-KW"/>
</dbReference>
<dbReference type="GO" id="GO:0004674">
    <property type="term" value="F:protein serine/threonine kinase activity"/>
    <property type="evidence" value="ECO:0000315"/>
    <property type="project" value="Xenbase"/>
</dbReference>
<dbReference type="GO" id="GO:0042813">
    <property type="term" value="F:Wnt receptor activity"/>
    <property type="evidence" value="ECO:0000318"/>
    <property type="project" value="GO_Central"/>
</dbReference>
<dbReference type="GO" id="GO:0017147">
    <property type="term" value="F:Wnt-protein binding"/>
    <property type="evidence" value="ECO:0000318"/>
    <property type="project" value="GO_Central"/>
</dbReference>
<dbReference type="GO" id="GO:0060070">
    <property type="term" value="P:canonical Wnt signaling pathway"/>
    <property type="evidence" value="ECO:0000318"/>
    <property type="project" value="GO_Central"/>
</dbReference>
<dbReference type="GO" id="GO:0001736">
    <property type="term" value="P:establishment of planar polarity"/>
    <property type="evidence" value="ECO:0000315"/>
    <property type="project" value="Xenbase"/>
</dbReference>
<dbReference type="GO" id="GO:0007399">
    <property type="term" value="P:nervous system development"/>
    <property type="evidence" value="ECO:0007669"/>
    <property type="project" value="UniProtKB-KW"/>
</dbReference>
<dbReference type="GO" id="GO:0014036">
    <property type="term" value="P:neural crest cell fate specification"/>
    <property type="evidence" value="ECO:0000304"/>
    <property type="project" value="AgBase"/>
</dbReference>
<dbReference type="GO" id="GO:0001755">
    <property type="term" value="P:neural crest cell migration"/>
    <property type="evidence" value="ECO:0000315"/>
    <property type="project" value="Xenbase"/>
</dbReference>
<dbReference type="GO" id="GO:0035567">
    <property type="term" value="P:non-canonical Wnt signaling pathway"/>
    <property type="evidence" value="ECO:0000318"/>
    <property type="project" value="GO_Central"/>
</dbReference>
<dbReference type="GO" id="GO:0032880">
    <property type="term" value="P:regulation of protein localization"/>
    <property type="evidence" value="ECO:0000314"/>
    <property type="project" value="BHF-UCL"/>
</dbReference>
<dbReference type="CDD" id="cd15033">
    <property type="entry name" value="7tmF_FZD3"/>
    <property type="match status" value="1"/>
</dbReference>
<dbReference type="CDD" id="cd07449">
    <property type="entry name" value="CRD_FZ3"/>
    <property type="match status" value="1"/>
</dbReference>
<dbReference type="FunFam" id="1.20.1070.10:FF:000036">
    <property type="entry name" value="frizzled-3 isoform X1"/>
    <property type="match status" value="1"/>
</dbReference>
<dbReference type="FunFam" id="1.10.2000.10:FF:000006">
    <property type="entry name" value="Frizzled-3 protein"/>
    <property type="match status" value="1"/>
</dbReference>
<dbReference type="Gene3D" id="1.10.2000.10">
    <property type="entry name" value="Frizzled cysteine-rich domain"/>
    <property type="match status" value="1"/>
</dbReference>
<dbReference type="Gene3D" id="1.20.1070.10">
    <property type="entry name" value="Rhodopsin 7-helix transmembrane proteins"/>
    <property type="match status" value="1"/>
</dbReference>
<dbReference type="InterPro" id="IPR015526">
    <property type="entry name" value="Frizzled/SFRP"/>
</dbReference>
<dbReference type="InterPro" id="IPR000539">
    <property type="entry name" value="Frizzled/Smoothened_7TM"/>
</dbReference>
<dbReference type="InterPro" id="IPR020067">
    <property type="entry name" value="Frizzled_dom"/>
</dbReference>
<dbReference type="InterPro" id="IPR036790">
    <property type="entry name" value="Frizzled_dom_sf"/>
</dbReference>
<dbReference type="InterPro" id="IPR041769">
    <property type="entry name" value="FZ3_CRD"/>
</dbReference>
<dbReference type="InterPro" id="IPR017981">
    <property type="entry name" value="GPCR_2-like_7TM"/>
</dbReference>
<dbReference type="PANTHER" id="PTHR11309">
    <property type="entry name" value="FRIZZLED"/>
    <property type="match status" value="1"/>
</dbReference>
<dbReference type="PANTHER" id="PTHR11309:SF22">
    <property type="entry name" value="FRIZZLED-3"/>
    <property type="match status" value="1"/>
</dbReference>
<dbReference type="Pfam" id="PF01534">
    <property type="entry name" value="Frizzled"/>
    <property type="match status" value="1"/>
</dbReference>
<dbReference type="Pfam" id="PF01392">
    <property type="entry name" value="Fz"/>
    <property type="match status" value="1"/>
</dbReference>
<dbReference type="PRINTS" id="PR00489">
    <property type="entry name" value="FRIZZLED"/>
</dbReference>
<dbReference type="SMART" id="SM00063">
    <property type="entry name" value="FRI"/>
    <property type="match status" value="1"/>
</dbReference>
<dbReference type="SMART" id="SM01330">
    <property type="entry name" value="Frizzled"/>
    <property type="match status" value="1"/>
</dbReference>
<dbReference type="SUPFAM" id="SSF63501">
    <property type="entry name" value="Frizzled cysteine-rich domain"/>
    <property type="match status" value="1"/>
</dbReference>
<dbReference type="PROSITE" id="PS50038">
    <property type="entry name" value="FZ"/>
    <property type="match status" value="1"/>
</dbReference>
<dbReference type="PROSITE" id="PS50261">
    <property type="entry name" value="G_PROTEIN_RECEP_F2_4"/>
    <property type="match status" value="1"/>
</dbReference>
<organism>
    <name type="scientific">Xenopus laevis</name>
    <name type="common">African clawed frog</name>
    <dbReference type="NCBI Taxonomy" id="8355"/>
    <lineage>
        <taxon>Eukaryota</taxon>
        <taxon>Metazoa</taxon>
        <taxon>Chordata</taxon>
        <taxon>Craniata</taxon>
        <taxon>Vertebrata</taxon>
        <taxon>Euteleostomi</taxon>
        <taxon>Amphibia</taxon>
        <taxon>Batrachia</taxon>
        <taxon>Anura</taxon>
        <taxon>Pipoidea</taxon>
        <taxon>Pipidae</taxon>
        <taxon>Xenopodinae</taxon>
        <taxon>Xenopus</taxon>
        <taxon>Xenopus</taxon>
    </lineage>
</organism>
<feature type="signal peptide" evidence="3">
    <location>
        <begin position="1"/>
        <end position="16"/>
    </location>
</feature>
<feature type="chain" id="PRO_0000012984" description="Frizzled-3">
    <location>
        <begin position="17"/>
        <end position="664"/>
    </location>
</feature>
<feature type="topological domain" description="Extracellular" evidence="3">
    <location>
        <begin position="17"/>
        <end position="204"/>
    </location>
</feature>
<feature type="transmembrane region" description="Helical; Name=1" evidence="3">
    <location>
        <begin position="205"/>
        <end position="225"/>
    </location>
</feature>
<feature type="topological domain" description="Cytoplasmic" evidence="3">
    <location>
        <begin position="226"/>
        <end position="236"/>
    </location>
</feature>
<feature type="transmembrane region" description="Helical; Name=2" evidence="3">
    <location>
        <begin position="237"/>
        <end position="257"/>
    </location>
</feature>
<feature type="topological domain" description="Extracellular" evidence="3">
    <location>
        <begin position="258"/>
        <end position="287"/>
    </location>
</feature>
<feature type="transmembrane region" description="Helical; Name=3" evidence="3">
    <location>
        <begin position="288"/>
        <end position="308"/>
    </location>
</feature>
<feature type="topological domain" description="Cytoplasmic" evidence="3">
    <location>
        <begin position="309"/>
        <end position="327"/>
    </location>
</feature>
<feature type="transmembrane region" description="Helical; Name=4" evidence="3">
    <location>
        <begin position="328"/>
        <end position="348"/>
    </location>
</feature>
<feature type="topological domain" description="Extracellular" evidence="3">
    <location>
        <begin position="349"/>
        <end position="373"/>
    </location>
</feature>
<feature type="transmembrane region" description="Helical; Name=5" evidence="3">
    <location>
        <begin position="374"/>
        <end position="394"/>
    </location>
</feature>
<feature type="topological domain" description="Cytoplasmic" evidence="3">
    <location>
        <begin position="395"/>
        <end position="419"/>
    </location>
</feature>
<feature type="transmembrane region" description="Helical; Name=6" evidence="3">
    <location>
        <begin position="420"/>
        <end position="440"/>
    </location>
</feature>
<feature type="topological domain" description="Extracellular" evidence="3">
    <location>
        <begin position="441"/>
        <end position="476"/>
    </location>
</feature>
<feature type="transmembrane region" description="Helical; Name=7" evidence="3">
    <location>
        <begin position="477"/>
        <end position="497"/>
    </location>
</feature>
<feature type="topological domain" description="Cytoplasmic" evidence="3">
    <location>
        <begin position="498"/>
        <end position="664"/>
    </location>
</feature>
<feature type="domain" description="FZ" evidence="4">
    <location>
        <begin position="22"/>
        <end position="135"/>
    </location>
</feature>
<feature type="region of interest" description="Disordered" evidence="5">
    <location>
        <begin position="537"/>
        <end position="664"/>
    </location>
</feature>
<feature type="short sequence motif" description="Lys-Thr-X-X-X-Trp motif, mediates interaction with the PDZ domain of Dvl family members" evidence="1">
    <location>
        <begin position="501"/>
        <end position="506"/>
    </location>
</feature>
<feature type="compositionally biased region" description="Polar residues" evidence="5">
    <location>
        <begin position="549"/>
        <end position="564"/>
    </location>
</feature>
<feature type="compositionally biased region" description="Polar residues" evidence="5">
    <location>
        <begin position="573"/>
        <end position="585"/>
    </location>
</feature>
<feature type="glycosylation site" description="N-linked (GlcNAc...) asparagine" evidence="3">
    <location>
        <position position="41"/>
    </location>
</feature>
<feature type="glycosylation site" description="N-linked (GlcNAc...) asparagine" evidence="3">
    <location>
        <position position="355"/>
    </location>
</feature>
<feature type="disulfide bond" evidence="4">
    <location>
        <begin position="27"/>
        <end position="88"/>
    </location>
</feature>
<feature type="disulfide bond" evidence="4">
    <location>
        <begin position="35"/>
        <end position="81"/>
    </location>
</feature>
<feature type="disulfide bond" evidence="4">
    <location>
        <begin position="72"/>
        <end position="109"/>
    </location>
</feature>
<feature type="disulfide bond" evidence="4">
    <location>
        <begin position="98"/>
        <end position="132"/>
    </location>
</feature>
<feature type="disulfide bond" evidence="4">
    <location>
        <begin position="102"/>
        <end position="126"/>
    </location>
</feature>
<feature type="mutagenesis site" description="Complete loss of activity to induce the Wnt target gene Siamois expression." evidence="6">
    <original>K</original>
    <variation>M</variation>
    <location>
        <position position="501"/>
    </location>
</feature>
<feature type="mutagenesis site" description="Complete loss of activity to induce the Wnt target gene Siamois expression." evidence="6">
    <original>T</original>
    <variation>V</variation>
    <location>
        <position position="502"/>
    </location>
</feature>
<feature type="mutagenesis site" description="No effect." evidence="6">
    <original>C</original>
    <variation>S</variation>
    <location>
        <position position="503"/>
    </location>
</feature>
<feature type="mutagenesis site" description="Complete loss of activity to induce the Wnt target gene Siamois expression." evidence="6">
    <original>W</original>
    <variation>G</variation>
    <location>
        <position position="506"/>
    </location>
</feature>
<feature type="mutagenesis site" description="No effect." evidence="6">
    <original>A</original>
    <variation>V</variation>
    <location>
        <position position="507"/>
    </location>
</feature>
<feature type="mutagenesis site" description="No effect." evidence="6">
    <original>S</original>
    <variation>A</variation>
    <location>
        <position position="508"/>
    </location>
</feature>
<feature type="mutagenesis site" description="No effect." evidence="6">
    <original>F</original>
    <variation>L</variation>
    <location>
        <position position="509"/>
    </location>
</feature>
<protein>
    <recommendedName>
        <fullName>Frizzled-3</fullName>
        <shortName>Fz-3</shortName>
        <shortName>Xfz3</shortName>
    </recommendedName>
</protein>
<reference key="1">
    <citation type="journal article" date="1998" name="Mech. Dev.">
        <title>Expression of Xfz3, a Xenopus frizzled family member, is restricted to the early nervous system.</title>
        <authorList>
            <person name="Shi D.-L."/>
            <person name="Goisset C."/>
            <person name="Boucaut J.-C."/>
        </authorList>
    </citation>
    <scope>NUCLEOTIDE SEQUENCE [MRNA]</scope>
    <source>
        <tissue>Embryo</tissue>
    </source>
</reference>
<reference key="2">
    <citation type="journal article" date="2000" name="EMBO J.">
        <title>The C-terminal cytoplasmic Lys-Thr-X-X-X-Trp motif in frizzled receptors mediates Wnt/beta-catenin signalling.</title>
        <authorList>
            <person name="Umbhauer M."/>
            <person name="Djiane A."/>
            <person name="Goisset C."/>
            <person name="Penzo-Mendez A."/>
            <person name="Riou J.-F."/>
            <person name="Boucaut J.-C."/>
            <person name="Shi D.-L."/>
        </authorList>
    </citation>
    <scope>MUTAGENESIS</scope>
    <scope>DOMAIN K-T-X-X-X-W MOTIF</scope>
    <scope>COUPLING TO BETA-CATENIN PATHWAY</scope>
</reference>
<evidence type="ECO:0000250" key="1"/>
<evidence type="ECO:0000250" key="2">
    <source>
        <dbReference type="UniProtKB" id="Q61086"/>
    </source>
</evidence>
<evidence type="ECO:0000255" key="3"/>
<evidence type="ECO:0000255" key="4">
    <source>
        <dbReference type="PROSITE-ProRule" id="PRU00090"/>
    </source>
</evidence>
<evidence type="ECO:0000256" key="5">
    <source>
        <dbReference type="SAM" id="MobiDB-lite"/>
    </source>
</evidence>
<evidence type="ECO:0000269" key="6">
    <source>
    </source>
</evidence>
<evidence type="ECO:0000305" key="7"/>
<name>FZD3_XENLA</name>
<comment type="function">
    <text evidence="2">Receptor for Wnt proteins. Most of frizzled receptors are coupled to the beta-catenin canonical signaling pathway, which leads to the activation of disheveled proteins, inhibition of GSK-3 kinase, nuclear accumulation of beta-catenin and activation of Wnt target genes. A second signaling pathway involving PKC and calcium fluxes has been seen for some family members, but it is not yet clear if it represents a distinct pathway or if it can be integrated in the canonical pathway, as PKC seems to be required for Wnt-mediated inactivation of GSK-3 kinase. Both pathways seem to involve interactions with G-proteins. Activated by Wnt8. Involved in transduction and intercellular transmission of polarity information during tissue morphogenesis and/or in differentiated tissues. Plays a role in controlling early axon growth and guidance processes necessary for the formation of a subset of central and peripheral major fiber tracts. Involved in the migration of cranial neural crest cells. May also be implicated in the transmission of sensory information from the trunk and limbs to the brain. Controls commissural sensory axons guidance after midline crossing along the anterior-posterior axis in the developing spinal cord in a Wnt-dependent signaling pathway. Together with FZD6, is involved in the neural tube closure and plays a role in the regulation of the establishment of planar cell polarity (PCP). Promotes neurogenesis by maintaining sympathetic neuroblasts within the cell cycle in a beta-catenin-dependent manner (By similarity).</text>
</comment>
<comment type="subcellular location">
    <subcellularLocation>
        <location>Membrane</location>
        <topology>Multi-pass membrane protein</topology>
    </subcellularLocation>
    <subcellularLocation>
        <location evidence="7">Cell membrane</location>
        <topology evidence="7">Multi-pass membrane protein</topology>
    </subcellularLocation>
    <subcellularLocation>
        <location evidence="2">Cell surface</location>
    </subcellularLocation>
    <subcellularLocation>
        <location evidence="2">Apical cell membrane</location>
        <topology>Multi-pass membrane protein</topology>
    </subcellularLocation>
</comment>
<comment type="tissue specificity">
    <text>Expression restricted to the early nervous system.</text>
</comment>
<comment type="developmental stage">
    <text>Low expression from cleavage stages to the end of gastrulation; increases from neurulation onward. During neurulation, first localized to the anterior neural folds. As neurulation proceeds, the expression extends to the trunk neural fold, with low levels in the posterior neural fold. At the end of neurulation, strongly expressed as a large band in the midbrain. After neural tube closure, also detected in the optic lobes and otic vesicles. During the late development, expression remains restricted to the nervous system. Detected until at least the larval stages.</text>
</comment>
<comment type="domain">
    <text evidence="6">Lys-Thr-X-X-X-Trp motif interacts with the PDZ domain of Dvl (Disheveled) family members and is involved in the activation of the Wnt/beta-catenin signaling pathway.</text>
</comment>
<comment type="domain">
    <text evidence="1">The FZ domain is involved in binding with Wnt ligands.</text>
</comment>
<comment type="similarity">
    <text evidence="7">Belongs to the G-protein coupled receptor Fz/Smo family.</text>
</comment>
<gene>
    <name type="primary">fzd3</name>
    <name type="synonym">fz3</name>
</gene>